<feature type="chain" id="PRO_0000162466" description="Regulatory protein RecX">
    <location>
        <begin position="1"/>
        <end position="166"/>
    </location>
</feature>
<proteinExistence type="inferred from homology"/>
<dbReference type="EMBL" id="AE006468">
    <property type="protein sequence ID" value="AAL21708.1"/>
    <property type="molecule type" value="Genomic_DNA"/>
</dbReference>
<dbReference type="RefSeq" id="WP_001294864.1">
    <property type="nucleotide sequence ID" value="NC_003197.2"/>
</dbReference>
<dbReference type="SMR" id="Q8ZMK5"/>
<dbReference type="STRING" id="99287.STM2828"/>
<dbReference type="PaxDb" id="99287-STM2828"/>
<dbReference type="KEGG" id="stm:STM2828"/>
<dbReference type="PATRIC" id="fig|99287.12.peg.2982"/>
<dbReference type="HOGENOM" id="CLU_066607_3_2_6"/>
<dbReference type="OMA" id="EPQDWFE"/>
<dbReference type="PhylomeDB" id="Q8ZMK5"/>
<dbReference type="BioCyc" id="SENT99287:STM2828-MONOMER"/>
<dbReference type="Proteomes" id="UP000001014">
    <property type="component" value="Chromosome"/>
</dbReference>
<dbReference type="GO" id="GO:0005737">
    <property type="term" value="C:cytoplasm"/>
    <property type="evidence" value="ECO:0007669"/>
    <property type="project" value="UniProtKB-SubCell"/>
</dbReference>
<dbReference type="GO" id="GO:0006282">
    <property type="term" value="P:regulation of DNA repair"/>
    <property type="evidence" value="ECO:0007669"/>
    <property type="project" value="UniProtKB-UniRule"/>
</dbReference>
<dbReference type="FunFam" id="1.10.10.10:FF:000133">
    <property type="entry name" value="Regulatory protein RecX"/>
    <property type="match status" value="1"/>
</dbReference>
<dbReference type="FunFam" id="1.10.10.10:FF:000134">
    <property type="entry name" value="Regulatory protein RecX"/>
    <property type="match status" value="1"/>
</dbReference>
<dbReference type="Gene3D" id="1.10.10.10">
    <property type="entry name" value="Winged helix-like DNA-binding domain superfamily/Winged helix DNA-binding domain"/>
    <property type="match status" value="3"/>
</dbReference>
<dbReference type="HAMAP" id="MF_01114">
    <property type="entry name" value="RecX"/>
    <property type="match status" value="1"/>
</dbReference>
<dbReference type="InterPro" id="IPR053926">
    <property type="entry name" value="RecX_HTH_1st"/>
</dbReference>
<dbReference type="InterPro" id="IPR053924">
    <property type="entry name" value="RecX_HTH_2nd"/>
</dbReference>
<dbReference type="InterPro" id="IPR053925">
    <property type="entry name" value="RecX_HTH_3rd"/>
</dbReference>
<dbReference type="InterPro" id="IPR003783">
    <property type="entry name" value="Regulatory_RecX"/>
</dbReference>
<dbReference type="InterPro" id="IPR036388">
    <property type="entry name" value="WH-like_DNA-bd_sf"/>
</dbReference>
<dbReference type="NCBIfam" id="NF001052">
    <property type="entry name" value="PRK00117.1-1"/>
    <property type="match status" value="1"/>
</dbReference>
<dbReference type="PANTHER" id="PTHR33602">
    <property type="entry name" value="REGULATORY PROTEIN RECX FAMILY PROTEIN"/>
    <property type="match status" value="1"/>
</dbReference>
<dbReference type="PANTHER" id="PTHR33602:SF1">
    <property type="entry name" value="REGULATORY PROTEIN RECX FAMILY PROTEIN"/>
    <property type="match status" value="1"/>
</dbReference>
<dbReference type="Pfam" id="PF21982">
    <property type="entry name" value="RecX_HTH1"/>
    <property type="match status" value="1"/>
</dbReference>
<dbReference type="Pfam" id="PF02631">
    <property type="entry name" value="RecX_HTH2"/>
    <property type="match status" value="1"/>
</dbReference>
<dbReference type="Pfam" id="PF21981">
    <property type="entry name" value="RecX_HTH3"/>
    <property type="match status" value="1"/>
</dbReference>
<accession>Q8ZMK5</accession>
<reference key="1">
    <citation type="journal article" date="2001" name="Nature">
        <title>Complete genome sequence of Salmonella enterica serovar Typhimurium LT2.</title>
        <authorList>
            <person name="McClelland M."/>
            <person name="Sanderson K.E."/>
            <person name="Spieth J."/>
            <person name="Clifton S.W."/>
            <person name="Latreille P."/>
            <person name="Courtney L."/>
            <person name="Porwollik S."/>
            <person name="Ali J."/>
            <person name="Dante M."/>
            <person name="Du F."/>
            <person name="Hou S."/>
            <person name="Layman D."/>
            <person name="Leonard S."/>
            <person name="Nguyen C."/>
            <person name="Scott K."/>
            <person name="Holmes A."/>
            <person name="Grewal N."/>
            <person name="Mulvaney E."/>
            <person name="Ryan E."/>
            <person name="Sun H."/>
            <person name="Florea L."/>
            <person name="Miller W."/>
            <person name="Stoneking T."/>
            <person name="Nhan M."/>
            <person name="Waterston R."/>
            <person name="Wilson R.K."/>
        </authorList>
    </citation>
    <scope>NUCLEOTIDE SEQUENCE [LARGE SCALE GENOMIC DNA]</scope>
    <source>
        <strain>LT2 / SGSC1412 / ATCC 700720</strain>
    </source>
</reference>
<organism>
    <name type="scientific">Salmonella typhimurium (strain LT2 / SGSC1412 / ATCC 700720)</name>
    <dbReference type="NCBI Taxonomy" id="99287"/>
    <lineage>
        <taxon>Bacteria</taxon>
        <taxon>Pseudomonadati</taxon>
        <taxon>Pseudomonadota</taxon>
        <taxon>Gammaproteobacteria</taxon>
        <taxon>Enterobacterales</taxon>
        <taxon>Enterobacteriaceae</taxon>
        <taxon>Salmonella</taxon>
    </lineage>
</organism>
<evidence type="ECO:0000250" key="1"/>
<evidence type="ECO:0000305" key="2"/>
<keyword id="KW-0963">Cytoplasm</keyword>
<keyword id="KW-1185">Reference proteome</keyword>
<protein>
    <recommendedName>
        <fullName>Regulatory protein RecX</fullName>
    </recommendedName>
</protein>
<comment type="function">
    <text evidence="1">Modulates RecA activity.</text>
</comment>
<comment type="subcellular location">
    <subcellularLocation>
        <location evidence="2">Cytoplasm</location>
    </subcellularLocation>
</comment>
<comment type="similarity">
    <text evidence="2">Belongs to the RecX family.</text>
</comment>
<sequence length="166" mass="19663">MSEPTSRRPAYARLLDRAVRILAVRDHSEQELRRKLSAPVMGKNGPEEIDATADDYERVIAWCHEHHYLDDERFVMRFIASRSRKGYGPARIRQELNQKGISRESTEKAMRECEIDWSEMAREQAVRKYGEPLPSNFSEKVKVQRFLLYRGYLMDNIQQIWRNFAD</sequence>
<name>RECX_SALTY</name>
<gene>
    <name type="primary">recX</name>
    <name type="ordered locus">STM2828</name>
</gene>